<dbReference type="EC" id="1.3.1.14"/>
<dbReference type="EMBL" id="CR936503">
    <property type="protein sequence ID" value="CAI55259.1"/>
    <property type="molecule type" value="Genomic_DNA"/>
</dbReference>
<dbReference type="RefSeq" id="WP_011374659.1">
    <property type="nucleotide sequence ID" value="NC_007576.1"/>
</dbReference>
<dbReference type="SMR" id="Q38X22"/>
<dbReference type="STRING" id="314315.LCA_0957"/>
<dbReference type="KEGG" id="lsa:LCA_0957"/>
<dbReference type="eggNOG" id="COG0167">
    <property type="taxonomic scope" value="Bacteria"/>
</dbReference>
<dbReference type="HOGENOM" id="CLU_042042_0_0_9"/>
<dbReference type="OrthoDB" id="9794954at2"/>
<dbReference type="UniPathway" id="UPA00070">
    <property type="reaction ID" value="UER00945"/>
</dbReference>
<dbReference type="Proteomes" id="UP000002707">
    <property type="component" value="Chromosome"/>
</dbReference>
<dbReference type="GO" id="GO:0005737">
    <property type="term" value="C:cytoplasm"/>
    <property type="evidence" value="ECO:0007669"/>
    <property type="project" value="UniProtKB-SubCell"/>
</dbReference>
<dbReference type="GO" id="GO:0004589">
    <property type="term" value="F:dihydroorotate dehydrogenase (NAD+) activity"/>
    <property type="evidence" value="ECO:0007669"/>
    <property type="project" value="UniProtKB-EC"/>
</dbReference>
<dbReference type="GO" id="GO:0006207">
    <property type="term" value="P:'de novo' pyrimidine nucleobase biosynthetic process"/>
    <property type="evidence" value="ECO:0007669"/>
    <property type="project" value="InterPro"/>
</dbReference>
<dbReference type="GO" id="GO:0044205">
    <property type="term" value="P:'de novo' UMP biosynthetic process"/>
    <property type="evidence" value="ECO:0007669"/>
    <property type="project" value="UniProtKB-UniRule"/>
</dbReference>
<dbReference type="CDD" id="cd04740">
    <property type="entry name" value="DHOD_1B_like"/>
    <property type="match status" value="1"/>
</dbReference>
<dbReference type="FunFam" id="3.20.20.70:FF:000069">
    <property type="entry name" value="Dihydroorotate dehydrogenase"/>
    <property type="match status" value="1"/>
</dbReference>
<dbReference type="Gene3D" id="3.20.20.70">
    <property type="entry name" value="Aldolase class I"/>
    <property type="match status" value="1"/>
</dbReference>
<dbReference type="HAMAP" id="MF_00224">
    <property type="entry name" value="DHO_dh_type1"/>
    <property type="match status" value="1"/>
</dbReference>
<dbReference type="InterPro" id="IPR013785">
    <property type="entry name" value="Aldolase_TIM"/>
</dbReference>
<dbReference type="InterPro" id="IPR050074">
    <property type="entry name" value="DHO_dehydrogenase"/>
</dbReference>
<dbReference type="InterPro" id="IPR033888">
    <property type="entry name" value="DHOD_1B"/>
</dbReference>
<dbReference type="InterPro" id="IPR024920">
    <property type="entry name" value="Dihydroorotate_DH_1"/>
</dbReference>
<dbReference type="InterPro" id="IPR012135">
    <property type="entry name" value="Dihydroorotate_DH_1_2"/>
</dbReference>
<dbReference type="InterPro" id="IPR005720">
    <property type="entry name" value="Dihydroorotate_DH_cat"/>
</dbReference>
<dbReference type="InterPro" id="IPR001295">
    <property type="entry name" value="Dihydroorotate_DH_CS"/>
</dbReference>
<dbReference type="InterPro" id="IPR049622">
    <property type="entry name" value="Dihydroorotate_DH_I"/>
</dbReference>
<dbReference type="NCBIfam" id="NF005574">
    <property type="entry name" value="PRK07259.1"/>
    <property type="match status" value="1"/>
</dbReference>
<dbReference type="NCBIfam" id="TIGR01037">
    <property type="entry name" value="pyrD_sub1_fam"/>
    <property type="match status" value="1"/>
</dbReference>
<dbReference type="PANTHER" id="PTHR48109:SF1">
    <property type="entry name" value="DIHYDROOROTATE DEHYDROGENASE (FUMARATE)"/>
    <property type="match status" value="1"/>
</dbReference>
<dbReference type="PANTHER" id="PTHR48109">
    <property type="entry name" value="DIHYDROOROTATE DEHYDROGENASE (QUINONE), MITOCHONDRIAL-RELATED"/>
    <property type="match status" value="1"/>
</dbReference>
<dbReference type="Pfam" id="PF01180">
    <property type="entry name" value="DHO_dh"/>
    <property type="match status" value="1"/>
</dbReference>
<dbReference type="PIRSF" id="PIRSF000164">
    <property type="entry name" value="DHO_oxidase"/>
    <property type="match status" value="1"/>
</dbReference>
<dbReference type="SUPFAM" id="SSF51395">
    <property type="entry name" value="FMN-linked oxidoreductases"/>
    <property type="match status" value="1"/>
</dbReference>
<dbReference type="PROSITE" id="PS00911">
    <property type="entry name" value="DHODEHASE_1"/>
    <property type="match status" value="1"/>
</dbReference>
<dbReference type="PROSITE" id="PS00912">
    <property type="entry name" value="DHODEHASE_2"/>
    <property type="match status" value="1"/>
</dbReference>
<sequence>MTSDLRVSLPGLELKNPIMPASGCFGFGQEYGRYYDLNLLGAFIIKAATKEPRLGNATPRVAETPSGMLNAIGLQNPGIEAIMAEKLPWLAERYPDLPIIANVAGNTEADYVAVCERISQAPNVHAIELNISCPNVAHGGLEFGTSPEAAATLTKACVAVSQVPVYVKLSPNVTDIRPIAKAVEAAGAAGFSLINTLVGMRIDPKTRQPILANQTGGLSGLAIKPVAIRLVHQVRSISNLPIIGMGGVATAGDALELMAAGANAIAVGTANFSEPFACPNIIKALPDELAKYDLHDFKTFAVNQEVL</sequence>
<protein>
    <recommendedName>
        <fullName>Dihydroorotate dehydrogenase B (NAD(+)), catalytic subunit</fullName>
        <shortName>DHOD B</shortName>
        <shortName>DHODase B</shortName>
        <shortName>DHOdehase B</shortName>
        <ecNumber>1.3.1.14</ecNumber>
    </recommendedName>
    <alternativeName>
        <fullName>Dihydroorotate oxidase B</fullName>
    </alternativeName>
    <alternativeName>
        <fullName>Orotate reductase (NADH)</fullName>
    </alternativeName>
</protein>
<reference key="1">
    <citation type="journal article" date="2005" name="Nat. Biotechnol.">
        <title>The complete genome sequence of the meat-borne lactic acid bacterium Lactobacillus sakei 23K.</title>
        <authorList>
            <person name="Chaillou S."/>
            <person name="Champomier-Verges M.-C."/>
            <person name="Cornet M."/>
            <person name="Crutz-Le Coq A.-M."/>
            <person name="Dudez A.-M."/>
            <person name="Martin V."/>
            <person name="Beaufils S."/>
            <person name="Darbon-Rongere E."/>
            <person name="Bossy R."/>
            <person name="Loux V."/>
            <person name="Zagorec M."/>
        </authorList>
    </citation>
    <scope>NUCLEOTIDE SEQUENCE [LARGE SCALE GENOMIC DNA]</scope>
    <source>
        <strain>23K</strain>
    </source>
</reference>
<accession>Q38X22</accession>
<evidence type="ECO:0000250" key="1"/>
<evidence type="ECO:0000305" key="2"/>
<keyword id="KW-0963">Cytoplasm</keyword>
<keyword id="KW-0285">Flavoprotein</keyword>
<keyword id="KW-0288">FMN</keyword>
<keyword id="KW-0520">NAD</keyword>
<keyword id="KW-0560">Oxidoreductase</keyword>
<keyword id="KW-0665">Pyrimidine biosynthesis</keyword>
<keyword id="KW-1185">Reference proteome</keyword>
<comment type="function">
    <text evidence="1">Catalyzes the conversion of dihydroorotate to orotate with NAD(+) as electron acceptor.</text>
</comment>
<comment type="catalytic activity">
    <reaction>
        <text>(S)-dihydroorotate + NAD(+) = orotate + NADH + H(+)</text>
        <dbReference type="Rhea" id="RHEA:13513"/>
        <dbReference type="ChEBI" id="CHEBI:15378"/>
        <dbReference type="ChEBI" id="CHEBI:30839"/>
        <dbReference type="ChEBI" id="CHEBI:30864"/>
        <dbReference type="ChEBI" id="CHEBI:57540"/>
        <dbReference type="ChEBI" id="CHEBI:57945"/>
        <dbReference type="EC" id="1.3.1.14"/>
    </reaction>
</comment>
<comment type="cofactor">
    <cofactor evidence="1">
        <name>FMN</name>
        <dbReference type="ChEBI" id="CHEBI:58210"/>
    </cofactor>
    <text evidence="1">Binds 1 FMN per subunit.</text>
</comment>
<comment type="pathway">
    <text>Pyrimidine metabolism; UMP biosynthesis via de novo pathway; orotate from (S)-dihydroorotate (NAD(+) route): step 1/1.</text>
</comment>
<comment type="subunit">
    <text evidence="1">Heterotetramer of 2 PyrK and 2 PyrD type B subunits.</text>
</comment>
<comment type="subcellular location">
    <subcellularLocation>
        <location evidence="1">Cytoplasm</location>
    </subcellularLocation>
</comment>
<comment type="similarity">
    <text evidence="2">Belongs to the dihydroorotate dehydrogenase family. Type 1 subfamily.</text>
</comment>
<name>PYRDB_LATSS</name>
<organism>
    <name type="scientific">Latilactobacillus sakei subsp. sakei (strain 23K)</name>
    <name type="common">Lactobacillus sakei subsp. sakei</name>
    <dbReference type="NCBI Taxonomy" id="314315"/>
    <lineage>
        <taxon>Bacteria</taxon>
        <taxon>Bacillati</taxon>
        <taxon>Bacillota</taxon>
        <taxon>Bacilli</taxon>
        <taxon>Lactobacillales</taxon>
        <taxon>Lactobacillaceae</taxon>
        <taxon>Latilactobacillus</taxon>
    </lineage>
</organism>
<feature type="chain" id="PRO_0000336449" description="Dihydroorotate dehydrogenase B (NAD(+)), catalytic subunit">
    <location>
        <begin position="1"/>
        <end position="307"/>
    </location>
</feature>
<feature type="active site" description="Nucleophile">
    <location>
        <position position="133"/>
    </location>
</feature>
<feature type="binding site" evidence="1">
    <location>
        <position position="22"/>
    </location>
    <ligand>
        <name>FMN</name>
        <dbReference type="ChEBI" id="CHEBI:58210"/>
    </ligand>
</feature>
<feature type="binding site" evidence="1">
    <location>
        <begin position="46"/>
        <end position="47"/>
    </location>
    <ligand>
        <name>FMN</name>
        <dbReference type="ChEBI" id="CHEBI:58210"/>
    </ligand>
</feature>
<feature type="binding site" evidence="1">
    <location>
        <position position="46"/>
    </location>
    <ligand>
        <name>substrate</name>
    </ligand>
</feature>
<feature type="binding site" evidence="1">
    <location>
        <begin position="70"/>
        <end position="74"/>
    </location>
    <ligand>
        <name>substrate</name>
    </ligand>
</feature>
<feature type="binding site" evidence="1">
    <location>
        <position position="102"/>
    </location>
    <ligand>
        <name>FMN</name>
        <dbReference type="ChEBI" id="CHEBI:58210"/>
    </ligand>
</feature>
<feature type="binding site" evidence="1">
    <location>
        <position position="130"/>
    </location>
    <ligand>
        <name>FMN</name>
        <dbReference type="ChEBI" id="CHEBI:58210"/>
    </ligand>
</feature>
<feature type="binding site" evidence="1">
    <location>
        <position position="130"/>
    </location>
    <ligand>
        <name>substrate</name>
    </ligand>
</feature>
<feature type="binding site" evidence="1">
    <location>
        <position position="168"/>
    </location>
    <ligand>
        <name>FMN</name>
        <dbReference type="ChEBI" id="CHEBI:58210"/>
    </ligand>
</feature>
<feature type="binding site" evidence="1">
    <location>
        <position position="194"/>
    </location>
    <ligand>
        <name>FMN</name>
        <dbReference type="ChEBI" id="CHEBI:58210"/>
    </ligand>
</feature>
<feature type="binding site" evidence="1">
    <location>
        <begin position="195"/>
        <end position="196"/>
    </location>
    <ligand>
        <name>substrate</name>
    </ligand>
</feature>
<feature type="binding site" evidence="1">
    <location>
        <position position="220"/>
    </location>
    <ligand>
        <name>FMN</name>
        <dbReference type="ChEBI" id="CHEBI:58210"/>
    </ligand>
</feature>
<feature type="binding site" evidence="1">
    <location>
        <begin position="246"/>
        <end position="247"/>
    </location>
    <ligand>
        <name>FMN</name>
        <dbReference type="ChEBI" id="CHEBI:58210"/>
    </ligand>
</feature>
<feature type="binding site" evidence="1">
    <location>
        <begin position="268"/>
        <end position="269"/>
    </location>
    <ligand>
        <name>FMN</name>
        <dbReference type="ChEBI" id="CHEBI:58210"/>
    </ligand>
</feature>
<proteinExistence type="inferred from homology"/>
<gene>
    <name type="primary">pyrD</name>
    <name type="ordered locus">LCA_0957</name>
</gene>